<proteinExistence type="inferred from homology"/>
<dbReference type="EMBL" id="CP001600">
    <property type="protein sequence ID" value="ACR69992.1"/>
    <property type="molecule type" value="Genomic_DNA"/>
</dbReference>
<dbReference type="RefSeq" id="WP_015872090.1">
    <property type="nucleotide sequence ID" value="NZ_CP169062.1"/>
</dbReference>
<dbReference type="SMR" id="C5BEJ2"/>
<dbReference type="STRING" id="67780.B6E78_06060"/>
<dbReference type="GeneID" id="69539712"/>
<dbReference type="KEGG" id="eic:NT01EI_2825"/>
<dbReference type="PATRIC" id="fig|634503.3.peg.2530"/>
<dbReference type="HOGENOM" id="CLU_009621_2_1_6"/>
<dbReference type="OrthoDB" id="9806651at2"/>
<dbReference type="Proteomes" id="UP000001485">
    <property type="component" value="Chromosome"/>
</dbReference>
<dbReference type="GO" id="GO:0005737">
    <property type="term" value="C:cytoplasm"/>
    <property type="evidence" value="ECO:0007669"/>
    <property type="project" value="UniProtKB-SubCell"/>
</dbReference>
<dbReference type="GO" id="GO:0009380">
    <property type="term" value="C:excinuclease repair complex"/>
    <property type="evidence" value="ECO:0007669"/>
    <property type="project" value="InterPro"/>
</dbReference>
<dbReference type="GO" id="GO:0005524">
    <property type="term" value="F:ATP binding"/>
    <property type="evidence" value="ECO:0007669"/>
    <property type="project" value="UniProtKB-UniRule"/>
</dbReference>
<dbReference type="GO" id="GO:0016887">
    <property type="term" value="F:ATP hydrolysis activity"/>
    <property type="evidence" value="ECO:0007669"/>
    <property type="project" value="InterPro"/>
</dbReference>
<dbReference type="GO" id="GO:0003677">
    <property type="term" value="F:DNA binding"/>
    <property type="evidence" value="ECO:0007669"/>
    <property type="project" value="UniProtKB-UniRule"/>
</dbReference>
<dbReference type="GO" id="GO:0009381">
    <property type="term" value="F:excinuclease ABC activity"/>
    <property type="evidence" value="ECO:0007669"/>
    <property type="project" value="UniProtKB-UniRule"/>
</dbReference>
<dbReference type="GO" id="GO:0004386">
    <property type="term" value="F:helicase activity"/>
    <property type="evidence" value="ECO:0007669"/>
    <property type="project" value="UniProtKB-KW"/>
</dbReference>
<dbReference type="GO" id="GO:0006289">
    <property type="term" value="P:nucleotide-excision repair"/>
    <property type="evidence" value="ECO:0007669"/>
    <property type="project" value="UniProtKB-UniRule"/>
</dbReference>
<dbReference type="GO" id="GO:0009432">
    <property type="term" value="P:SOS response"/>
    <property type="evidence" value="ECO:0007669"/>
    <property type="project" value="UniProtKB-UniRule"/>
</dbReference>
<dbReference type="CDD" id="cd17916">
    <property type="entry name" value="DEXHc_UvrB"/>
    <property type="match status" value="1"/>
</dbReference>
<dbReference type="CDD" id="cd18790">
    <property type="entry name" value="SF2_C_UvrB"/>
    <property type="match status" value="1"/>
</dbReference>
<dbReference type="FunFam" id="3.40.50.300:FF:000257">
    <property type="entry name" value="UvrABC system protein B"/>
    <property type="match status" value="1"/>
</dbReference>
<dbReference type="FunFam" id="3.40.50.300:FF:000401">
    <property type="entry name" value="UvrABC system protein B"/>
    <property type="match status" value="1"/>
</dbReference>
<dbReference type="FunFam" id="3.40.50.300:FF:000477">
    <property type="entry name" value="UvrABC system protein B"/>
    <property type="match status" value="1"/>
</dbReference>
<dbReference type="Gene3D" id="3.40.50.300">
    <property type="entry name" value="P-loop containing nucleotide triphosphate hydrolases"/>
    <property type="match status" value="3"/>
</dbReference>
<dbReference type="Gene3D" id="4.10.860.10">
    <property type="entry name" value="UVR domain"/>
    <property type="match status" value="1"/>
</dbReference>
<dbReference type="HAMAP" id="MF_00204">
    <property type="entry name" value="UvrB"/>
    <property type="match status" value="1"/>
</dbReference>
<dbReference type="InterPro" id="IPR006935">
    <property type="entry name" value="Helicase/UvrB_N"/>
</dbReference>
<dbReference type="InterPro" id="IPR014001">
    <property type="entry name" value="Helicase_ATP-bd"/>
</dbReference>
<dbReference type="InterPro" id="IPR001650">
    <property type="entry name" value="Helicase_C-like"/>
</dbReference>
<dbReference type="InterPro" id="IPR027417">
    <property type="entry name" value="P-loop_NTPase"/>
</dbReference>
<dbReference type="InterPro" id="IPR001943">
    <property type="entry name" value="UVR_dom"/>
</dbReference>
<dbReference type="InterPro" id="IPR036876">
    <property type="entry name" value="UVR_dom_sf"/>
</dbReference>
<dbReference type="InterPro" id="IPR004807">
    <property type="entry name" value="UvrB"/>
</dbReference>
<dbReference type="InterPro" id="IPR041471">
    <property type="entry name" value="UvrB_inter"/>
</dbReference>
<dbReference type="InterPro" id="IPR024759">
    <property type="entry name" value="UvrB_YAD/RRR_dom"/>
</dbReference>
<dbReference type="NCBIfam" id="NF003673">
    <property type="entry name" value="PRK05298.1"/>
    <property type="match status" value="1"/>
</dbReference>
<dbReference type="NCBIfam" id="TIGR00631">
    <property type="entry name" value="uvrb"/>
    <property type="match status" value="1"/>
</dbReference>
<dbReference type="PANTHER" id="PTHR24029">
    <property type="entry name" value="UVRABC SYSTEM PROTEIN B"/>
    <property type="match status" value="1"/>
</dbReference>
<dbReference type="PANTHER" id="PTHR24029:SF0">
    <property type="entry name" value="UVRABC SYSTEM PROTEIN B"/>
    <property type="match status" value="1"/>
</dbReference>
<dbReference type="Pfam" id="PF00271">
    <property type="entry name" value="Helicase_C"/>
    <property type="match status" value="1"/>
</dbReference>
<dbReference type="Pfam" id="PF04851">
    <property type="entry name" value="ResIII"/>
    <property type="match status" value="1"/>
</dbReference>
<dbReference type="Pfam" id="PF02151">
    <property type="entry name" value="UVR"/>
    <property type="match status" value="1"/>
</dbReference>
<dbReference type="Pfam" id="PF12344">
    <property type="entry name" value="UvrB"/>
    <property type="match status" value="1"/>
</dbReference>
<dbReference type="Pfam" id="PF17757">
    <property type="entry name" value="UvrB_inter"/>
    <property type="match status" value="1"/>
</dbReference>
<dbReference type="SMART" id="SM00487">
    <property type="entry name" value="DEXDc"/>
    <property type="match status" value="1"/>
</dbReference>
<dbReference type="SMART" id="SM00490">
    <property type="entry name" value="HELICc"/>
    <property type="match status" value="1"/>
</dbReference>
<dbReference type="SUPFAM" id="SSF46600">
    <property type="entry name" value="C-terminal UvrC-binding domain of UvrB"/>
    <property type="match status" value="1"/>
</dbReference>
<dbReference type="SUPFAM" id="SSF52540">
    <property type="entry name" value="P-loop containing nucleoside triphosphate hydrolases"/>
    <property type="match status" value="2"/>
</dbReference>
<dbReference type="PROSITE" id="PS51192">
    <property type="entry name" value="HELICASE_ATP_BIND_1"/>
    <property type="match status" value="1"/>
</dbReference>
<dbReference type="PROSITE" id="PS51194">
    <property type="entry name" value="HELICASE_CTER"/>
    <property type="match status" value="1"/>
</dbReference>
<dbReference type="PROSITE" id="PS50151">
    <property type="entry name" value="UVR"/>
    <property type="match status" value="1"/>
</dbReference>
<reference key="1">
    <citation type="submission" date="2009-03" db="EMBL/GenBank/DDBJ databases">
        <title>Complete genome sequence of Edwardsiella ictaluri 93-146.</title>
        <authorList>
            <person name="Williams M.L."/>
            <person name="Gillaspy A.F."/>
            <person name="Dyer D.W."/>
            <person name="Thune R.L."/>
            <person name="Waldbieser G.C."/>
            <person name="Schuster S.C."/>
            <person name="Gipson J."/>
            <person name="Zaitshik J."/>
            <person name="Landry C."/>
            <person name="Lawrence M.L."/>
        </authorList>
    </citation>
    <scope>NUCLEOTIDE SEQUENCE [LARGE SCALE GENOMIC DNA]</scope>
    <source>
        <strain>93-146</strain>
    </source>
</reference>
<accession>C5BEJ2</accession>
<comment type="function">
    <text evidence="1">The UvrABC repair system catalyzes the recognition and processing of DNA lesions. A damage recognition complex composed of 2 UvrA and 2 UvrB subunits scans DNA for abnormalities. Upon binding of the UvrA(2)B(2) complex to a putative damaged site, the DNA wraps around one UvrB monomer. DNA wrap is dependent on ATP binding by UvrB and probably causes local melting of the DNA helix, facilitating insertion of UvrB beta-hairpin between the DNA strands. Then UvrB probes one DNA strand for the presence of a lesion. If a lesion is found the UvrA subunits dissociate and the UvrB-DNA preincision complex is formed. This complex is subsequently bound by UvrC and the second UvrB is released. If no lesion is found, the DNA wraps around the other UvrB subunit that will check the other stand for damage.</text>
</comment>
<comment type="subunit">
    <text evidence="1">Forms a heterotetramer with UvrA during the search for lesions. Interacts with UvrC in an incision complex.</text>
</comment>
<comment type="subcellular location">
    <subcellularLocation>
        <location evidence="1">Cytoplasm</location>
    </subcellularLocation>
</comment>
<comment type="domain">
    <text evidence="1">The beta-hairpin motif is involved in DNA binding.</text>
</comment>
<comment type="similarity">
    <text evidence="1">Belongs to the UvrB family.</text>
</comment>
<organism>
    <name type="scientific">Edwardsiella ictaluri (strain 93-146)</name>
    <dbReference type="NCBI Taxonomy" id="634503"/>
    <lineage>
        <taxon>Bacteria</taxon>
        <taxon>Pseudomonadati</taxon>
        <taxon>Pseudomonadota</taxon>
        <taxon>Gammaproteobacteria</taxon>
        <taxon>Enterobacterales</taxon>
        <taxon>Hafniaceae</taxon>
        <taxon>Edwardsiella</taxon>
    </lineage>
</organism>
<keyword id="KW-0067">ATP-binding</keyword>
<keyword id="KW-0963">Cytoplasm</keyword>
<keyword id="KW-0227">DNA damage</keyword>
<keyword id="KW-0228">DNA excision</keyword>
<keyword id="KW-0234">DNA repair</keyword>
<keyword id="KW-0267">Excision nuclease</keyword>
<keyword id="KW-0347">Helicase</keyword>
<keyword id="KW-0378">Hydrolase</keyword>
<keyword id="KW-0547">Nucleotide-binding</keyword>
<keyword id="KW-0742">SOS response</keyword>
<evidence type="ECO:0000255" key="1">
    <source>
        <dbReference type="HAMAP-Rule" id="MF_00204"/>
    </source>
</evidence>
<evidence type="ECO:0000256" key="2">
    <source>
        <dbReference type="SAM" id="MobiDB-lite"/>
    </source>
</evidence>
<feature type="chain" id="PRO_1000204132" description="UvrABC system protein B">
    <location>
        <begin position="1"/>
        <end position="672"/>
    </location>
</feature>
<feature type="domain" description="Helicase ATP-binding" evidence="1">
    <location>
        <begin position="26"/>
        <end position="183"/>
    </location>
</feature>
<feature type="domain" description="Helicase C-terminal" evidence="1">
    <location>
        <begin position="431"/>
        <end position="597"/>
    </location>
</feature>
<feature type="domain" description="UVR" evidence="1">
    <location>
        <begin position="632"/>
        <end position="667"/>
    </location>
</feature>
<feature type="region of interest" description="Disordered" evidence="2">
    <location>
        <begin position="601"/>
        <end position="623"/>
    </location>
</feature>
<feature type="short sequence motif" description="Beta-hairpin">
    <location>
        <begin position="92"/>
        <end position="115"/>
    </location>
</feature>
<feature type="binding site" evidence="1">
    <location>
        <begin position="39"/>
        <end position="46"/>
    </location>
    <ligand>
        <name>ATP</name>
        <dbReference type="ChEBI" id="CHEBI:30616"/>
    </ligand>
</feature>
<gene>
    <name evidence="1" type="primary">uvrB</name>
    <name type="ordered locus">NT01EI_2825</name>
</gene>
<sequence length="672" mass="76114">MSKTFKLHSAFQPSGDQPEAIRRLEEGLEDGLAHQTLLGVTGSGKTFTIANVIADLNRPTMVMAPNKTLAAQLYGEMKQFFPENAVEYFVSYYDYYQPEAYVPSSDTFIEKDASVNEHIEQMRLSATKALLERRDVVVVASVSAIYGLGDPDLYLKMMLHLTQGMLIDQRSILRRLSELQYVRNDQAFARGTFRVRGEVIDIFPAEADDEALRVELFDDEVERLSLFDPLTGQLLRTVPRFTVYPKTHYVTPRERILQAMEAIRAELAMRRQSLLASNKLLEEQRLAQRTQFDLEMMNELGYCSGIENYSRYLSGRGPGEPPPTLFDYLPADGLLVIDESHVTIPQIGGMYRGDRARKETLVEYGFRLPSALDNRPLRFEEFEALAPQTIYVSATPGNYELDKSGGEVIDQVVRPTGLLDPLIEVRPVATQVDDLLSEINLRAAIGERVLVTTLTKRMAEDLTEYLEEHGVRVRYLHSDIDTVERMEIIRDLRLGEFDALVGINLLREGLDMPEVSLVAILDADKEGFLRSERSLIQTIGRAARNLNGKAILYADKITPSMARAIGETERRRERQQAFNLAHGITPQALNKKVTDILQLGDGPVRSRTKGARGQRAAEPHPDYHTLSAKQIEQQIQRLETQMYQHAQNLEFEQAAALRDEIHILREQFKNAS</sequence>
<protein>
    <recommendedName>
        <fullName evidence="1">UvrABC system protein B</fullName>
        <shortName evidence="1">Protein UvrB</shortName>
    </recommendedName>
    <alternativeName>
        <fullName evidence="1">Excinuclease ABC subunit B</fullName>
    </alternativeName>
</protein>
<name>UVRB_EDWI9</name>